<sequence>MTHPIRKTHPVIKIMNTALIDLPAPINISAWWNFGFLLGMCLSIQIFTGLFLSMHYIPHIDLAFSSVSHICRDVNFGWLLRVLHANGGSMFFICLYIHIARGIYYSSFHLYFTWMTGVVLLILVMATAFLGYVLPWGQMSFWGATVITNLISAVPYVGSMMVQWLWGGFSVDNATLTRFFTLHFILPFVVLAMVAIHLLFLHQTGSNNPLGLNSNAEKIPFHPYFTIKDLFGVVVMVWLLMILVLSGPYLLSDPDNFIPANPLVTPTHIQPEWYFLFAYAILRSIPNKLGGVVALLASVVILIILPLYKNKFMSSSFYPLNQMLFWGFISIFILLTWIGAQAIEEPFYTSAQILTSLYFFYFILSPLLSVLWDYVME</sequence>
<gene>
    <name type="primary">mt:Cyt-b</name>
    <name type="synonym">Cob</name>
    <name type="synonym">cytb</name>
</gene>
<proteinExistence type="inferred from homology"/>
<protein>
    <recommendedName>
        <fullName>Cytochrome b</fullName>
    </recommendedName>
    <alternativeName>
        <fullName>Complex III subunit 3</fullName>
    </alternativeName>
    <alternativeName>
        <fullName>Complex III subunit III</fullName>
    </alternativeName>
    <alternativeName>
        <fullName>Cytochrome b-c1 complex subunit 3</fullName>
    </alternativeName>
    <alternativeName>
        <fullName>Ubiquinol-cytochrome-c reductase complex cytochrome b subunit</fullName>
    </alternativeName>
</protein>
<organism>
    <name type="scientific">Priapulus caudatus</name>
    <name type="common">Priapulid worm</name>
    <dbReference type="NCBI Taxonomy" id="37621"/>
    <lineage>
        <taxon>Eukaryota</taxon>
        <taxon>Metazoa</taxon>
        <taxon>Ecdysozoa</taxon>
        <taxon>Scalidophora</taxon>
        <taxon>Priapulida</taxon>
        <taxon>Priapulimorpha</taxon>
        <taxon>Priapulimorphida</taxon>
        <taxon>Priapulidae</taxon>
        <taxon>Priapulus</taxon>
    </lineage>
</organism>
<reference key="1">
    <citation type="journal article" date="2006" name="Evol. Dev.">
        <title>Mitogenomics and phylogenomics reveal priapulid worms as extant models of the ancestral Ecdysozoan.</title>
        <authorList>
            <person name="Webster B.L."/>
            <person name="Copley R.R."/>
            <person name="Jenner R.A."/>
            <person name="Mackenzie-Dodds J.A."/>
            <person name="Bourlat S.J."/>
            <person name="Rota-Stabelli O."/>
            <person name="Littlewood D.T."/>
            <person name="Telford M.J."/>
        </authorList>
    </citation>
    <scope>NUCLEOTIDE SEQUENCE [GENOMIC DNA]</scope>
</reference>
<comment type="function">
    <text evidence="3">Component of the ubiquinol-cytochrome c reductase complex (complex III or cytochrome b-c1 complex) that is part of the mitochondrial respiratory chain. The b-c1 complex mediates electron transfer from ubiquinol to cytochrome c. Contributes to the generation of a proton gradient across the mitochondrial membrane that is then used for ATP synthesis.</text>
</comment>
<comment type="cofactor">
    <cofactor evidence="3">
        <name>heme b</name>
        <dbReference type="ChEBI" id="CHEBI:60344"/>
    </cofactor>
    <text evidence="3">Binds 2 heme b groups non-covalently.</text>
</comment>
<comment type="subunit">
    <text evidence="1">The main subunits of complex b-c1 are: cytochrome b, cytochrome c1 and the Rieske protein.</text>
</comment>
<comment type="subcellular location">
    <subcellularLocation>
        <location evidence="3">Mitochondrion inner membrane</location>
        <topology evidence="3">Multi-pass membrane protein</topology>
    </subcellularLocation>
</comment>
<comment type="similarity">
    <text evidence="5 6">Belongs to the cytochrome b family.</text>
</comment>
<comment type="caution">
    <text evidence="3">The protein contains an even number of transmembrane helices, fewer than predicted by bioinformatics tools.</text>
</comment>
<dbReference type="EMBL" id="DQ463747">
    <property type="protein sequence ID" value="ABE03635.1"/>
    <property type="molecule type" value="Genomic_DNA"/>
</dbReference>
<dbReference type="RefSeq" id="YP_850994.1">
    <property type="nucleotide sequence ID" value="NC_008557.1"/>
</dbReference>
<dbReference type="SMR" id="A0MCU0"/>
<dbReference type="EnsemblMetazoa" id="GeneID_4466903_df_mr">
    <property type="protein sequence ID" value="YP_850994.1"/>
    <property type="gene ID" value="GeneID_4466903"/>
</dbReference>
<dbReference type="GeneID" id="4466903"/>
<dbReference type="CTD" id="4519"/>
<dbReference type="OMA" id="NISAWWN"/>
<dbReference type="OrthoDB" id="6753971at2759"/>
<dbReference type="Proteomes" id="UP000695022">
    <property type="component" value="Mitochondrion MT"/>
</dbReference>
<dbReference type="GO" id="GO:0005743">
    <property type="term" value="C:mitochondrial inner membrane"/>
    <property type="evidence" value="ECO:0007669"/>
    <property type="project" value="UniProtKB-SubCell"/>
</dbReference>
<dbReference type="GO" id="GO:0045275">
    <property type="term" value="C:respiratory chain complex III"/>
    <property type="evidence" value="ECO:0007669"/>
    <property type="project" value="InterPro"/>
</dbReference>
<dbReference type="GO" id="GO:0046872">
    <property type="term" value="F:metal ion binding"/>
    <property type="evidence" value="ECO:0007669"/>
    <property type="project" value="UniProtKB-KW"/>
</dbReference>
<dbReference type="GO" id="GO:0008121">
    <property type="term" value="F:ubiquinol-cytochrome-c reductase activity"/>
    <property type="evidence" value="ECO:0007669"/>
    <property type="project" value="InterPro"/>
</dbReference>
<dbReference type="GO" id="GO:0006122">
    <property type="term" value="P:mitochondrial electron transport, ubiquinol to cytochrome c"/>
    <property type="evidence" value="ECO:0007669"/>
    <property type="project" value="TreeGrafter"/>
</dbReference>
<dbReference type="CDD" id="cd00290">
    <property type="entry name" value="cytochrome_b_C"/>
    <property type="match status" value="1"/>
</dbReference>
<dbReference type="CDD" id="cd00284">
    <property type="entry name" value="Cytochrome_b_N"/>
    <property type="match status" value="1"/>
</dbReference>
<dbReference type="FunFam" id="1.20.810.10:FF:000002">
    <property type="entry name" value="Cytochrome b"/>
    <property type="match status" value="1"/>
</dbReference>
<dbReference type="Gene3D" id="1.20.810.10">
    <property type="entry name" value="Cytochrome Bc1 Complex, Chain C"/>
    <property type="match status" value="1"/>
</dbReference>
<dbReference type="InterPro" id="IPR005798">
    <property type="entry name" value="Cyt_b/b6_C"/>
</dbReference>
<dbReference type="InterPro" id="IPR036150">
    <property type="entry name" value="Cyt_b/b6_C_sf"/>
</dbReference>
<dbReference type="InterPro" id="IPR005797">
    <property type="entry name" value="Cyt_b/b6_N"/>
</dbReference>
<dbReference type="InterPro" id="IPR027387">
    <property type="entry name" value="Cytb/b6-like_sf"/>
</dbReference>
<dbReference type="InterPro" id="IPR030689">
    <property type="entry name" value="Cytochrome_b"/>
</dbReference>
<dbReference type="InterPro" id="IPR048260">
    <property type="entry name" value="Cytochrome_b_C_euk/bac"/>
</dbReference>
<dbReference type="InterPro" id="IPR048259">
    <property type="entry name" value="Cytochrome_b_N_euk/bac"/>
</dbReference>
<dbReference type="InterPro" id="IPR016174">
    <property type="entry name" value="Di-haem_cyt_TM"/>
</dbReference>
<dbReference type="PANTHER" id="PTHR19271">
    <property type="entry name" value="CYTOCHROME B"/>
    <property type="match status" value="1"/>
</dbReference>
<dbReference type="PANTHER" id="PTHR19271:SF16">
    <property type="entry name" value="CYTOCHROME B"/>
    <property type="match status" value="1"/>
</dbReference>
<dbReference type="Pfam" id="PF00032">
    <property type="entry name" value="Cytochrom_B_C"/>
    <property type="match status" value="1"/>
</dbReference>
<dbReference type="Pfam" id="PF00033">
    <property type="entry name" value="Cytochrome_B"/>
    <property type="match status" value="1"/>
</dbReference>
<dbReference type="PIRSF" id="PIRSF038885">
    <property type="entry name" value="COB"/>
    <property type="match status" value="1"/>
</dbReference>
<dbReference type="SUPFAM" id="SSF81648">
    <property type="entry name" value="a domain/subunit of cytochrome bc1 complex (Ubiquinol-cytochrome c reductase)"/>
    <property type="match status" value="1"/>
</dbReference>
<dbReference type="SUPFAM" id="SSF81342">
    <property type="entry name" value="Transmembrane di-heme cytochromes"/>
    <property type="match status" value="1"/>
</dbReference>
<dbReference type="PROSITE" id="PS51003">
    <property type="entry name" value="CYTB_CTER"/>
    <property type="match status" value="1"/>
</dbReference>
<dbReference type="PROSITE" id="PS51002">
    <property type="entry name" value="CYTB_NTER"/>
    <property type="match status" value="1"/>
</dbReference>
<feature type="chain" id="PRO_0000357465" description="Cytochrome b">
    <location>
        <begin position="1"/>
        <end position="377"/>
    </location>
</feature>
<feature type="transmembrane region" description="Helical" evidence="3">
    <location>
        <begin position="34"/>
        <end position="54"/>
    </location>
</feature>
<feature type="transmembrane region" description="Helical" evidence="3">
    <location>
        <begin position="78"/>
        <end position="100"/>
    </location>
</feature>
<feature type="transmembrane region" description="Helical" evidence="3">
    <location>
        <begin position="113"/>
        <end position="133"/>
    </location>
</feature>
<feature type="transmembrane region" description="Helical" evidence="3">
    <location>
        <begin position="179"/>
        <end position="199"/>
    </location>
</feature>
<feature type="transmembrane region" description="Helical" evidence="3">
    <location>
        <begin position="225"/>
        <end position="245"/>
    </location>
</feature>
<feature type="transmembrane region" description="Helical" evidence="4">
    <location>
        <begin position="288"/>
        <end position="308"/>
    </location>
</feature>
<feature type="transmembrane region" description="Helical" evidence="4">
    <location>
        <begin position="323"/>
        <end position="343"/>
    </location>
</feature>
<feature type="transmembrane region" description="Helical" evidence="4">
    <location>
        <begin position="352"/>
        <end position="372"/>
    </location>
</feature>
<feature type="binding site" description="axial binding residue" evidence="3">
    <location>
        <position position="84"/>
    </location>
    <ligand>
        <name>heme b</name>
        <dbReference type="ChEBI" id="CHEBI:60344"/>
        <label>b562</label>
    </ligand>
    <ligandPart>
        <name>Fe</name>
        <dbReference type="ChEBI" id="CHEBI:18248"/>
    </ligandPart>
</feature>
<feature type="binding site" description="axial binding residue" evidence="3">
    <location>
        <position position="98"/>
    </location>
    <ligand>
        <name>heme b</name>
        <dbReference type="ChEBI" id="CHEBI:60344"/>
        <label>b566</label>
    </ligand>
    <ligandPart>
        <name>Fe</name>
        <dbReference type="ChEBI" id="CHEBI:18248"/>
    </ligandPart>
</feature>
<feature type="binding site" description="axial binding residue" evidence="3">
    <location>
        <position position="183"/>
    </location>
    <ligand>
        <name>heme b</name>
        <dbReference type="ChEBI" id="CHEBI:60344"/>
        <label>b562</label>
    </ligand>
    <ligandPart>
        <name>Fe</name>
        <dbReference type="ChEBI" id="CHEBI:18248"/>
    </ligandPart>
</feature>
<feature type="binding site" description="axial binding residue" evidence="3">
    <location>
        <position position="197"/>
    </location>
    <ligand>
        <name>heme b</name>
        <dbReference type="ChEBI" id="CHEBI:60344"/>
        <label>b566</label>
    </ligand>
    <ligandPart>
        <name>Fe</name>
        <dbReference type="ChEBI" id="CHEBI:18248"/>
    </ligandPart>
</feature>
<feature type="binding site" evidence="2">
    <location>
        <position position="202"/>
    </location>
    <ligand>
        <name>a ubiquinone</name>
        <dbReference type="ChEBI" id="CHEBI:16389"/>
    </ligand>
</feature>
<accession>A0MCU0</accession>
<name>CYB_PRICU</name>
<geneLocation type="mitochondrion"/>
<evidence type="ECO:0000250" key="1"/>
<evidence type="ECO:0000250" key="2">
    <source>
        <dbReference type="UniProtKB" id="P00157"/>
    </source>
</evidence>
<evidence type="ECO:0000250" key="3">
    <source>
        <dbReference type="UniProtKB" id="P00163"/>
    </source>
</evidence>
<evidence type="ECO:0000255" key="4"/>
<evidence type="ECO:0000255" key="5">
    <source>
        <dbReference type="PROSITE-ProRule" id="PRU00967"/>
    </source>
</evidence>
<evidence type="ECO:0000255" key="6">
    <source>
        <dbReference type="PROSITE-ProRule" id="PRU00968"/>
    </source>
</evidence>
<keyword id="KW-0249">Electron transport</keyword>
<keyword id="KW-0349">Heme</keyword>
<keyword id="KW-0408">Iron</keyword>
<keyword id="KW-0472">Membrane</keyword>
<keyword id="KW-0479">Metal-binding</keyword>
<keyword id="KW-0496">Mitochondrion</keyword>
<keyword id="KW-0999">Mitochondrion inner membrane</keyword>
<keyword id="KW-0679">Respiratory chain</keyword>
<keyword id="KW-0812">Transmembrane</keyword>
<keyword id="KW-1133">Transmembrane helix</keyword>
<keyword id="KW-0813">Transport</keyword>
<keyword id="KW-0830">Ubiquinone</keyword>